<keyword id="KW-0687">Ribonucleoprotein</keyword>
<keyword id="KW-0689">Ribosomal protein</keyword>
<gene>
    <name evidence="1" type="primary">rpmD</name>
    <name type="ordered locus">EFER_3285</name>
</gene>
<name>RL30_ESCF3</name>
<sequence length="59" mass="6542">MAKTIKITQTRSAIGRLPKHKATLLGLGLRRIGHTVEREDTPAIRGMINAVSFMVKVEE</sequence>
<feature type="chain" id="PRO_1000144684" description="Large ribosomal subunit protein uL30">
    <location>
        <begin position="1"/>
        <end position="59"/>
    </location>
</feature>
<reference key="1">
    <citation type="journal article" date="2009" name="PLoS Genet.">
        <title>Organised genome dynamics in the Escherichia coli species results in highly diverse adaptive paths.</title>
        <authorList>
            <person name="Touchon M."/>
            <person name="Hoede C."/>
            <person name="Tenaillon O."/>
            <person name="Barbe V."/>
            <person name="Baeriswyl S."/>
            <person name="Bidet P."/>
            <person name="Bingen E."/>
            <person name="Bonacorsi S."/>
            <person name="Bouchier C."/>
            <person name="Bouvet O."/>
            <person name="Calteau A."/>
            <person name="Chiapello H."/>
            <person name="Clermont O."/>
            <person name="Cruveiller S."/>
            <person name="Danchin A."/>
            <person name="Diard M."/>
            <person name="Dossat C."/>
            <person name="Karoui M.E."/>
            <person name="Frapy E."/>
            <person name="Garry L."/>
            <person name="Ghigo J.M."/>
            <person name="Gilles A.M."/>
            <person name="Johnson J."/>
            <person name="Le Bouguenec C."/>
            <person name="Lescat M."/>
            <person name="Mangenot S."/>
            <person name="Martinez-Jehanne V."/>
            <person name="Matic I."/>
            <person name="Nassif X."/>
            <person name="Oztas S."/>
            <person name="Petit M.A."/>
            <person name="Pichon C."/>
            <person name="Rouy Z."/>
            <person name="Ruf C.S."/>
            <person name="Schneider D."/>
            <person name="Tourret J."/>
            <person name="Vacherie B."/>
            <person name="Vallenet D."/>
            <person name="Medigue C."/>
            <person name="Rocha E.P.C."/>
            <person name="Denamur E."/>
        </authorList>
    </citation>
    <scope>NUCLEOTIDE SEQUENCE [LARGE SCALE GENOMIC DNA]</scope>
    <source>
        <strain>ATCC 35469 / DSM 13698 / BCRC 15582 / CCUG 18766 / IAM 14443 / JCM 21226 / LMG 7866 / NBRC 102419 / NCTC 12128 / CDC 0568-73</strain>
    </source>
</reference>
<comment type="subunit">
    <text evidence="1">Part of the 50S ribosomal subunit.</text>
</comment>
<comment type="similarity">
    <text evidence="1">Belongs to the universal ribosomal protein uL30 family.</text>
</comment>
<proteinExistence type="inferred from homology"/>
<dbReference type="EMBL" id="CU928158">
    <property type="protein sequence ID" value="CAQ90765.1"/>
    <property type="molecule type" value="Genomic_DNA"/>
</dbReference>
<dbReference type="RefSeq" id="WP_001140433.1">
    <property type="nucleotide sequence ID" value="NC_011740.1"/>
</dbReference>
<dbReference type="SMR" id="B7LRR8"/>
<dbReference type="GeneID" id="93778685"/>
<dbReference type="KEGG" id="efe:EFER_3285"/>
<dbReference type="HOGENOM" id="CLU_131047_1_4_6"/>
<dbReference type="OrthoDB" id="9812790at2"/>
<dbReference type="Proteomes" id="UP000000745">
    <property type="component" value="Chromosome"/>
</dbReference>
<dbReference type="GO" id="GO:0022625">
    <property type="term" value="C:cytosolic large ribosomal subunit"/>
    <property type="evidence" value="ECO:0007669"/>
    <property type="project" value="TreeGrafter"/>
</dbReference>
<dbReference type="GO" id="GO:0003735">
    <property type="term" value="F:structural constituent of ribosome"/>
    <property type="evidence" value="ECO:0007669"/>
    <property type="project" value="InterPro"/>
</dbReference>
<dbReference type="GO" id="GO:0006412">
    <property type="term" value="P:translation"/>
    <property type="evidence" value="ECO:0007669"/>
    <property type="project" value="UniProtKB-UniRule"/>
</dbReference>
<dbReference type="CDD" id="cd01658">
    <property type="entry name" value="Ribosomal_L30"/>
    <property type="match status" value="1"/>
</dbReference>
<dbReference type="FunFam" id="3.30.1390.20:FF:000001">
    <property type="entry name" value="50S ribosomal protein L30"/>
    <property type="match status" value="1"/>
</dbReference>
<dbReference type="Gene3D" id="3.30.1390.20">
    <property type="entry name" value="Ribosomal protein L30, ferredoxin-like fold domain"/>
    <property type="match status" value="1"/>
</dbReference>
<dbReference type="HAMAP" id="MF_01371_B">
    <property type="entry name" value="Ribosomal_uL30_B"/>
    <property type="match status" value="1"/>
</dbReference>
<dbReference type="InterPro" id="IPR036919">
    <property type="entry name" value="Ribo_uL30_ferredoxin-like_sf"/>
</dbReference>
<dbReference type="InterPro" id="IPR005996">
    <property type="entry name" value="Ribosomal_uL30_bac-type"/>
</dbReference>
<dbReference type="InterPro" id="IPR018038">
    <property type="entry name" value="Ribosomal_uL30_CS"/>
</dbReference>
<dbReference type="InterPro" id="IPR016082">
    <property type="entry name" value="Ribosomal_uL30_ferredoxin-like"/>
</dbReference>
<dbReference type="NCBIfam" id="TIGR01308">
    <property type="entry name" value="rpmD_bact"/>
    <property type="match status" value="1"/>
</dbReference>
<dbReference type="PANTHER" id="PTHR15892:SF2">
    <property type="entry name" value="LARGE RIBOSOMAL SUBUNIT PROTEIN UL30M"/>
    <property type="match status" value="1"/>
</dbReference>
<dbReference type="PANTHER" id="PTHR15892">
    <property type="entry name" value="MITOCHONDRIAL RIBOSOMAL PROTEIN L30"/>
    <property type="match status" value="1"/>
</dbReference>
<dbReference type="Pfam" id="PF00327">
    <property type="entry name" value="Ribosomal_L30"/>
    <property type="match status" value="1"/>
</dbReference>
<dbReference type="PIRSF" id="PIRSF002211">
    <property type="entry name" value="Ribosomal_L30_bac-type"/>
    <property type="match status" value="1"/>
</dbReference>
<dbReference type="SUPFAM" id="SSF55129">
    <property type="entry name" value="Ribosomal protein L30p/L7e"/>
    <property type="match status" value="1"/>
</dbReference>
<dbReference type="PROSITE" id="PS00634">
    <property type="entry name" value="RIBOSOMAL_L30"/>
    <property type="match status" value="1"/>
</dbReference>
<accession>B7LRR8</accession>
<evidence type="ECO:0000255" key="1">
    <source>
        <dbReference type="HAMAP-Rule" id="MF_01371"/>
    </source>
</evidence>
<evidence type="ECO:0000305" key="2"/>
<protein>
    <recommendedName>
        <fullName evidence="1">Large ribosomal subunit protein uL30</fullName>
    </recommendedName>
    <alternativeName>
        <fullName evidence="2">50S ribosomal protein L30</fullName>
    </alternativeName>
</protein>
<organism>
    <name type="scientific">Escherichia fergusonii (strain ATCC 35469 / DSM 13698 / CCUG 18766 / IAM 14443 / JCM 21226 / LMG 7866 / NBRC 102419 / NCTC 12128 / CDC 0568-73)</name>
    <dbReference type="NCBI Taxonomy" id="585054"/>
    <lineage>
        <taxon>Bacteria</taxon>
        <taxon>Pseudomonadati</taxon>
        <taxon>Pseudomonadota</taxon>
        <taxon>Gammaproteobacteria</taxon>
        <taxon>Enterobacterales</taxon>
        <taxon>Enterobacteriaceae</taxon>
        <taxon>Escherichia</taxon>
    </lineage>
</organism>